<dbReference type="EC" id="3.1.21.10" evidence="1"/>
<dbReference type="EMBL" id="CP000159">
    <property type="protein sequence ID" value="ABC45936.1"/>
    <property type="molecule type" value="Genomic_DNA"/>
</dbReference>
<dbReference type="RefSeq" id="WP_011405380.1">
    <property type="nucleotide sequence ID" value="NC_007677.1"/>
</dbReference>
<dbReference type="RefSeq" id="YP_446766.1">
    <property type="nucleotide sequence ID" value="NC_007677.1"/>
</dbReference>
<dbReference type="SMR" id="Q2RZ65"/>
<dbReference type="STRING" id="309807.SRU_2668"/>
<dbReference type="EnsemblBacteria" id="ABC45936">
    <property type="protein sequence ID" value="ABC45936"/>
    <property type="gene ID" value="SRU_2668"/>
</dbReference>
<dbReference type="KEGG" id="sru:SRU_2668"/>
<dbReference type="PATRIC" id="fig|309807.25.peg.2781"/>
<dbReference type="eggNOG" id="COG0817">
    <property type="taxonomic scope" value="Bacteria"/>
</dbReference>
<dbReference type="HOGENOM" id="CLU_091257_3_0_10"/>
<dbReference type="OrthoDB" id="9805499at2"/>
<dbReference type="Proteomes" id="UP000008674">
    <property type="component" value="Chromosome"/>
</dbReference>
<dbReference type="GO" id="GO:0005737">
    <property type="term" value="C:cytoplasm"/>
    <property type="evidence" value="ECO:0007669"/>
    <property type="project" value="UniProtKB-SubCell"/>
</dbReference>
<dbReference type="GO" id="GO:0048476">
    <property type="term" value="C:Holliday junction resolvase complex"/>
    <property type="evidence" value="ECO:0007669"/>
    <property type="project" value="UniProtKB-UniRule"/>
</dbReference>
<dbReference type="GO" id="GO:0008821">
    <property type="term" value="F:crossover junction DNA endonuclease activity"/>
    <property type="evidence" value="ECO:0007669"/>
    <property type="project" value="UniProtKB-UniRule"/>
</dbReference>
<dbReference type="GO" id="GO:0003677">
    <property type="term" value="F:DNA binding"/>
    <property type="evidence" value="ECO:0007669"/>
    <property type="project" value="UniProtKB-KW"/>
</dbReference>
<dbReference type="GO" id="GO:0000287">
    <property type="term" value="F:magnesium ion binding"/>
    <property type="evidence" value="ECO:0007669"/>
    <property type="project" value="UniProtKB-UniRule"/>
</dbReference>
<dbReference type="GO" id="GO:0006310">
    <property type="term" value="P:DNA recombination"/>
    <property type="evidence" value="ECO:0007669"/>
    <property type="project" value="UniProtKB-UniRule"/>
</dbReference>
<dbReference type="GO" id="GO:0006281">
    <property type="term" value="P:DNA repair"/>
    <property type="evidence" value="ECO:0007669"/>
    <property type="project" value="UniProtKB-UniRule"/>
</dbReference>
<dbReference type="CDD" id="cd16962">
    <property type="entry name" value="RuvC"/>
    <property type="match status" value="1"/>
</dbReference>
<dbReference type="FunFam" id="3.30.420.10:FF:000002">
    <property type="entry name" value="Crossover junction endodeoxyribonuclease RuvC"/>
    <property type="match status" value="1"/>
</dbReference>
<dbReference type="Gene3D" id="3.30.420.10">
    <property type="entry name" value="Ribonuclease H-like superfamily/Ribonuclease H"/>
    <property type="match status" value="1"/>
</dbReference>
<dbReference type="HAMAP" id="MF_00034">
    <property type="entry name" value="RuvC"/>
    <property type="match status" value="1"/>
</dbReference>
<dbReference type="InterPro" id="IPR012337">
    <property type="entry name" value="RNaseH-like_sf"/>
</dbReference>
<dbReference type="InterPro" id="IPR036397">
    <property type="entry name" value="RNaseH_sf"/>
</dbReference>
<dbReference type="InterPro" id="IPR020563">
    <property type="entry name" value="X-over_junc_endoDNase_Mg_BS"/>
</dbReference>
<dbReference type="InterPro" id="IPR002176">
    <property type="entry name" value="X-over_junc_endoDNase_RuvC"/>
</dbReference>
<dbReference type="NCBIfam" id="TIGR00228">
    <property type="entry name" value="ruvC"/>
    <property type="match status" value="1"/>
</dbReference>
<dbReference type="PANTHER" id="PTHR30194">
    <property type="entry name" value="CROSSOVER JUNCTION ENDODEOXYRIBONUCLEASE RUVC"/>
    <property type="match status" value="1"/>
</dbReference>
<dbReference type="PANTHER" id="PTHR30194:SF3">
    <property type="entry name" value="CROSSOVER JUNCTION ENDODEOXYRIBONUCLEASE RUVC"/>
    <property type="match status" value="1"/>
</dbReference>
<dbReference type="Pfam" id="PF02075">
    <property type="entry name" value="RuvC"/>
    <property type="match status" value="1"/>
</dbReference>
<dbReference type="PRINTS" id="PR00696">
    <property type="entry name" value="RSOLVASERUVC"/>
</dbReference>
<dbReference type="SUPFAM" id="SSF53098">
    <property type="entry name" value="Ribonuclease H-like"/>
    <property type="match status" value="1"/>
</dbReference>
<dbReference type="PROSITE" id="PS01321">
    <property type="entry name" value="RUVC"/>
    <property type="match status" value="1"/>
</dbReference>
<sequence length="179" mass="19137">MIILGVDPGSRATGYGLVDPSGGDEHLVAADTIRLADTDDHPTRLKQIYDALVDVIDAHGPDEFAVEMPVYGQNPQSMLKLGRAQAAAMMAALNRDLPVAQYTPKEVKKSVTGNGNASKKQVGFMIESILSAREQTFAHDTADALAIALCHGNRDAHDDGDSYTGWASFVDANPDRVSE</sequence>
<protein>
    <recommendedName>
        <fullName evidence="1">Crossover junction endodeoxyribonuclease RuvC</fullName>
        <ecNumber evidence="1">3.1.21.10</ecNumber>
    </recommendedName>
    <alternativeName>
        <fullName evidence="1">Holliday junction nuclease RuvC</fullName>
    </alternativeName>
    <alternativeName>
        <fullName evidence="1">Holliday junction resolvase RuvC</fullName>
    </alternativeName>
</protein>
<organism>
    <name type="scientific">Salinibacter ruber (strain DSM 13855 / M31)</name>
    <dbReference type="NCBI Taxonomy" id="309807"/>
    <lineage>
        <taxon>Bacteria</taxon>
        <taxon>Pseudomonadati</taxon>
        <taxon>Rhodothermota</taxon>
        <taxon>Rhodothermia</taxon>
        <taxon>Rhodothermales</taxon>
        <taxon>Salinibacteraceae</taxon>
        <taxon>Salinibacter</taxon>
    </lineage>
</organism>
<keyword id="KW-0963">Cytoplasm</keyword>
<keyword id="KW-0227">DNA damage</keyword>
<keyword id="KW-0233">DNA recombination</keyword>
<keyword id="KW-0234">DNA repair</keyword>
<keyword id="KW-0238">DNA-binding</keyword>
<keyword id="KW-0255">Endonuclease</keyword>
<keyword id="KW-0378">Hydrolase</keyword>
<keyword id="KW-0460">Magnesium</keyword>
<keyword id="KW-0479">Metal-binding</keyword>
<keyword id="KW-0540">Nuclease</keyword>
<keyword id="KW-1185">Reference proteome</keyword>
<reference key="1">
    <citation type="journal article" date="2005" name="Proc. Natl. Acad. Sci. U.S.A.">
        <title>The genome of Salinibacter ruber: convergence and gene exchange among hyperhalophilic bacteria and archaea.</title>
        <authorList>
            <person name="Mongodin E.F."/>
            <person name="Nelson K.E."/>
            <person name="Daugherty S."/>
            <person name="DeBoy R.T."/>
            <person name="Wister J."/>
            <person name="Khouri H."/>
            <person name="Weidman J."/>
            <person name="Walsh D.A."/>
            <person name="Papke R.T."/>
            <person name="Sanchez Perez G."/>
            <person name="Sharma A.K."/>
            <person name="Nesbo C.L."/>
            <person name="MacLeod D."/>
            <person name="Bapteste E."/>
            <person name="Doolittle W.F."/>
            <person name="Charlebois R.L."/>
            <person name="Legault B."/>
            <person name="Rodriguez-Valera F."/>
        </authorList>
    </citation>
    <scope>NUCLEOTIDE SEQUENCE [LARGE SCALE GENOMIC DNA]</scope>
    <source>
        <strain>DSM 13855 / CECT 5946 / M31</strain>
    </source>
</reference>
<gene>
    <name evidence="1" type="primary">ruvC</name>
    <name type="ordered locus">SRU_2668</name>
</gene>
<feature type="chain" id="PRO_1000002824" description="Crossover junction endodeoxyribonuclease RuvC">
    <location>
        <begin position="1"/>
        <end position="179"/>
    </location>
</feature>
<feature type="active site" evidence="1">
    <location>
        <position position="7"/>
    </location>
</feature>
<feature type="active site" evidence="1">
    <location>
        <position position="67"/>
    </location>
</feature>
<feature type="active site" evidence="1">
    <location>
        <position position="140"/>
    </location>
</feature>
<feature type="binding site" evidence="1">
    <location>
        <position position="7"/>
    </location>
    <ligand>
        <name>Mg(2+)</name>
        <dbReference type="ChEBI" id="CHEBI:18420"/>
        <label>1</label>
    </ligand>
</feature>
<feature type="binding site" evidence="1">
    <location>
        <position position="67"/>
    </location>
    <ligand>
        <name>Mg(2+)</name>
        <dbReference type="ChEBI" id="CHEBI:18420"/>
        <label>2</label>
    </ligand>
</feature>
<feature type="binding site" evidence="1">
    <location>
        <position position="140"/>
    </location>
    <ligand>
        <name>Mg(2+)</name>
        <dbReference type="ChEBI" id="CHEBI:18420"/>
        <label>1</label>
    </ligand>
</feature>
<proteinExistence type="inferred from homology"/>
<comment type="function">
    <text evidence="1">The RuvA-RuvB-RuvC complex processes Holliday junction (HJ) DNA during genetic recombination and DNA repair. Endonuclease that resolves HJ intermediates. Cleaves cruciform DNA by making single-stranded nicks across the HJ at symmetrical positions within the homologous arms, yielding a 5'-phosphate and a 3'-hydroxyl group; requires a central core of homology in the junction. The consensus cleavage sequence is 5'-(A/T)TT(C/G)-3'. Cleavage occurs on the 3'-side of the TT dinucleotide at the point of strand exchange. HJ branch migration catalyzed by RuvA-RuvB allows RuvC to scan DNA until it finds its consensus sequence, where it cleaves and resolves the cruciform DNA.</text>
</comment>
<comment type="catalytic activity">
    <reaction evidence="1">
        <text>Endonucleolytic cleavage at a junction such as a reciprocal single-stranded crossover between two homologous DNA duplexes (Holliday junction).</text>
        <dbReference type="EC" id="3.1.21.10"/>
    </reaction>
</comment>
<comment type="cofactor">
    <cofactor evidence="1">
        <name>Mg(2+)</name>
        <dbReference type="ChEBI" id="CHEBI:18420"/>
    </cofactor>
    <text evidence="1">Binds 2 Mg(2+) ion per subunit.</text>
</comment>
<comment type="subunit">
    <text evidence="1">Homodimer which binds Holliday junction (HJ) DNA. The HJ becomes 2-fold symmetrical on binding to RuvC with unstacked arms; it has a different conformation from HJ DNA in complex with RuvA. In the full resolvosome a probable DNA-RuvA(4)-RuvB(12)-RuvC(2) complex forms which resolves the HJ.</text>
</comment>
<comment type="subcellular location">
    <subcellularLocation>
        <location evidence="1">Cytoplasm</location>
    </subcellularLocation>
</comment>
<comment type="similarity">
    <text evidence="1">Belongs to the RuvC family.</text>
</comment>
<accession>Q2RZ65</accession>
<name>RUVC_SALRD</name>
<evidence type="ECO:0000255" key="1">
    <source>
        <dbReference type="HAMAP-Rule" id="MF_00034"/>
    </source>
</evidence>